<protein>
    <recommendedName>
        <fullName evidence="1">ATP-dependent 6-phosphofructokinase</fullName>
        <shortName evidence="1">ATP-PFK</shortName>
        <shortName evidence="1">Phosphofructokinase</shortName>
        <ecNumber evidence="1">2.7.1.11</ecNumber>
    </recommendedName>
    <alternativeName>
        <fullName evidence="1">Phosphohexokinase</fullName>
    </alternativeName>
</protein>
<feature type="chain" id="PRO_0000111967" description="ATP-dependent 6-phosphofructokinase">
    <location>
        <begin position="1"/>
        <end position="343"/>
    </location>
</feature>
<feature type="active site" description="Proton acceptor" evidence="1">
    <location>
        <position position="128"/>
    </location>
</feature>
<feature type="binding site" evidence="1">
    <location>
        <position position="10"/>
    </location>
    <ligand>
        <name>ATP</name>
        <dbReference type="ChEBI" id="CHEBI:30616"/>
    </ligand>
</feature>
<feature type="binding site" evidence="1">
    <location>
        <begin position="103"/>
        <end position="106"/>
    </location>
    <ligand>
        <name>ATP</name>
        <dbReference type="ChEBI" id="CHEBI:30616"/>
    </ligand>
</feature>
<feature type="binding site" evidence="1">
    <location>
        <position position="104"/>
    </location>
    <ligand>
        <name>Mg(2+)</name>
        <dbReference type="ChEBI" id="CHEBI:18420"/>
        <note>catalytic</note>
    </ligand>
</feature>
<feature type="binding site" description="in other chain" evidence="1">
    <location>
        <begin position="126"/>
        <end position="128"/>
    </location>
    <ligand>
        <name>substrate</name>
        <note>ligand shared between dimeric partners</note>
    </ligand>
</feature>
<feature type="binding site" evidence="1">
    <location>
        <position position="163"/>
    </location>
    <ligand>
        <name>substrate</name>
        <note>ligand shared between dimeric partners</note>
    </ligand>
</feature>
<feature type="binding site" description="in other chain" evidence="1">
    <location>
        <begin position="170"/>
        <end position="172"/>
    </location>
    <ligand>
        <name>substrate</name>
        <note>ligand shared between dimeric partners</note>
    </ligand>
</feature>
<feature type="binding site" description="in other chain" evidence="1">
    <location>
        <position position="223"/>
    </location>
    <ligand>
        <name>substrate</name>
        <note>ligand shared between dimeric partners</note>
    </ligand>
</feature>
<feature type="binding site" evidence="1">
    <location>
        <position position="267"/>
    </location>
    <ligand>
        <name>substrate</name>
        <note>ligand shared between dimeric partners</note>
    </ligand>
</feature>
<feature type="binding site" description="in other chain" evidence="1">
    <location>
        <begin position="273"/>
        <end position="276"/>
    </location>
    <ligand>
        <name>substrate</name>
        <note>ligand shared between dimeric partners</note>
    </ligand>
</feature>
<feature type="site" description="Important for substrate specificity; cannot use PPi as phosphoryl donor" evidence="1">
    <location>
        <position position="105"/>
    </location>
</feature>
<evidence type="ECO:0000255" key="1">
    <source>
        <dbReference type="HAMAP-Rule" id="MF_01976"/>
    </source>
</evidence>
<evidence type="ECO:0000305" key="2"/>
<proteinExistence type="inferred from homology"/>
<keyword id="KW-0067">ATP-binding</keyword>
<keyword id="KW-0963">Cytoplasm</keyword>
<keyword id="KW-0324">Glycolysis</keyword>
<keyword id="KW-0418">Kinase</keyword>
<keyword id="KW-0460">Magnesium</keyword>
<keyword id="KW-0479">Metal-binding</keyword>
<keyword id="KW-0547">Nucleotide-binding</keyword>
<keyword id="KW-1185">Reference proteome</keyword>
<keyword id="KW-0808">Transferase</keyword>
<dbReference type="EC" id="2.7.1.11" evidence="1"/>
<dbReference type="EMBL" id="Z99263">
    <property type="protein sequence ID" value="CAB16429.1"/>
    <property type="status" value="ALT_INIT"/>
    <property type="molecule type" value="Genomic_DNA"/>
</dbReference>
<dbReference type="EMBL" id="AL583923">
    <property type="protein sequence ID" value="CAC30654.1"/>
    <property type="molecule type" value="Genomic_DNA"/>
</dbReference>
<dbReference type="PIR" id="G87121">
    <property type="entry name" value="G87121"/>
</dbReference>
<dbReference type="PIR" id="T45407">
    <property type="entry name" value="T45407"/>
</dbReference>
<dbReference type="RefSeq" id="NP_302170.1">
    <property type="nucleotide sequence ID" value="NC_002677.1"/>
</dbReference>
<dbReference type="RefSeq" id="WP_010908491.1">
    <property type="nucleotide sequence ID" value="NC_002677.1"/>
</dbReference>
<dbReference type="SMR" id="O33106"/>
<dbReference type="STRING" id="272631.gene:17575546"/>
<dbReference type="KEGG" id="mle:ML1701"/>
<dbReference type="PATRIC" id="fig|272631.5.peg.3209"/>
<dbReference type="Leproma" id="ML1701"/>
<dbReference type="eggNOG" id="COG0205">
    <property type="taxonomic scope" value="Bacteria"/>
</dbReference>
<dbReference type="HOGENOM" id="CLU_020655_0_0_11"/>
<dbReference type="OrthoDB" id="9802503at2"/>
<dbReference type="UniPathway" id="UPA00109">
    <property type="reaction ID" value="UER00182"/>
</dbReference>
<dbReference type="Proteomes" id="UP000000806">
    <property type="component" value="Chromosome"/>
</dbReference>
<dbReference type="GO" id="GO:0005945">
    <property type="term" value="C:6-phosphofructokinase complex"/>
    <property type="evidence" value="ECO:0007669"/>
    <property type="project" value="TreeGrafter"/>
</dbReference>
<dbReference type="GO" id="GO:0003872">
    <property type="term" value="F:6-phosphofructokinase activity"/>
    <property type="evidence" value="ECO:0007669"/>
    <property type="project" value="UniProtKB-UniRule"/>
</dbReference>
<dbReference type="GO" id="GO:0016208">
    <property type="term" value="F:AMP binding"/>
    <property type="evidence" value="ECO:0007669"/>
    <property type="project" value="TreeGrafter"/>
</dbReference>
<dbReference type="GO" id="GO:0005524">
    <property type="term" value="F:ATP binding"/>
    <property type="evidence" value="ECO:0007669"/>
    <property type="project" value="UniProtKB-KW"/>
</dbReference>
<dbReference type="GO" id="GO:0047334">
    <property type="term" value="F:diphosphate-fructose-6-phosphate 1-phosphotransferase activity"/>
    <property type="evidence" value="ECO:0007669"/>
    <property type="project" value="InterPro"/>
</dbReference>
<dbReference type="GO" id="GO:0070095">
    <property type="term" value="F:fructose-6-phosphate binding"/>
    <property type="evidence" value="ECO:0007669"/>
    <property type="project" value="TreeGrafter"/>
</dbReference>
<dbReference type="GO" id="GO:0042802">
    <property type="term" value="F:identical protein binding"/>
    <property type="evidence" value="ECO:0007669"/>
    <property type="project" value="TreeGrafter"/>
</dbReference>
<dbReference type="GO" id="GO:0046872">
    <property type="term" value="F:metal ion binding"/>
    <property type="evidence" value="ECO:0007669"/>
    <property type="project" value="UniProtKB-KW"/>
</dbReference>
<dbReference type="GO" id="GO:0048029">
    <property type="term" value="F:monosaccharide binding"/>
    <property type="evidence" value="ECO:0007669"/>
    <property type="project" value="TreeGrafter"/>
</dbReference>
<dbReference type="GO" id="GO:0061621">
    <property type="term" value="P:canonical glycolysis"/>
    <property type="evidence" value="ECO:0007669"/>
    <property type="project" value="TreeGrafter"/>
</dbReference>
<dbReference type="GO" id="GO:0030388">
    <property type="term" value="P:fructose 1,6-bisphosphate metabolic process"/>
    <property type="evidence" value="ECO:0007669"/>
    <property type="project" value="TreeGrafter"/>
</dbReference>
<dbReference type="GO" id="GO:0006002">
    <property type="term" value="P:fructose 6-phosphate metabolic process"/>
    <property type="evidence" value="ECO:0007669"/>
    <property type="project" value="InterPro"/>
</dbReference>
<dbReference type="FunFam" id="3.40.50.460:FF:000005">
    <property type="entry name" value="ATP-dependent 6-phosphofructokinase"/>
    <property type="match status" value="1"/>
</dbReference>
<dbReference type="Gene3D" id="3.40.50.450">
    <property type="match status" value="1"/>
</dbReference>
<dbReference type="Gene3D" id="3.40.50.460">
    <property type="entry name" value="Phosphofructokinase domain"/>
    <property type="match status" value="1"/>
</dbReference>
<dbReference type="HAMAP" id="MF_01976">
    <property type="entry name" value="Phosphofructokinase_III"/>
    <property type="match status" value="1"/>
</dbReference>
<dbReference type="InterPro" id="IPR022953">
    <property type="entry name" value="ATP_PFK"/>
</dbReference>
<dbReference type="InterPro" id="IPR012003">
    <property type="entry name" value="ATP_PFK_prok-type"/>
</dbReference>
<dbReference type="InterPro" id="IPR015912">
    <property type="entry name" value="Phosphofructokinase_CS"/>
</dbReference>
<dbReference type="InterPro" id="IPR000023">
    <property type="entry name" value="Phosphofructokinase_dom"/>
</dbReference>
<dbReference type="InterPro" id="IPR012829">
    <property type="entry name" value="Phosphofructokinase_III"/>
</dbReference>
<dbReference type="InterPro" id="IPR035966">
    <property type="entry name" value="PKF_sf"/>
</dbReference>
<dbReference type="NCBIfam" id="TIGR02483">
    <property type="entry name" value="PFK_mixed"/>
    <property type="match status" value="1"/>
</dbReference>
<dbReference type="NCBIfam" id="NF002872">
    <property type="entry name" value="PRK03202.1"/>
    <property type="match status" value="1"/>
</dbReference>
<dbReference type="PANTHER" id="PTHR13697:SF52">
    <property type="entry name" value="ATP-DEPENDENT 6-PHOSPHOFRUCTOKINASE 3"/>
    <property type="match status" value="1"/>
</dbReference>
<dbReference type="PANTHER" id="PTHR13697">
    <property type="entry name" value="PHOSPHOFRUCTOKINASE"/>
    <property type="match status" value="1"/>
</dbReference>
<dbReference type="Pfam" id="PF00365">
    <property type="entry name" value="PFK"/>
    <property type="match status" value="1"/>
</dbReference>
<dbReference type="PIRSF" id="PIRSF000532">
    <property type="entry name" value="ATP_PFK_prok"/>
    <property type="match status" value="1"/>
</dbReference>
<dbReference type="PRINTS" id="PR00476">
    <property type="entry name" value="PHFRCTKINASE"/>
</dbReference>
<dbReference type="SUPFAM" id="SSF53784">
    <property type="entry name" value="Phosphofructokinase"/>
    <property type="match status" value="1"/>
</dbReference>
<dbReference type="PROSITE" id="PS00433">
    <property type="entry name" value="PHOSPHOFRUCTOKINASE"/>
    <property type="match status" value="1"/>
</dbReference>
<gene>
    <name evidence="1" type="primary">pfkA</name>
    <name type="ordered locus">ML1701</name>
    <name type="ORF">MLCB637.14</name>
</gene>
<name>PFKA_MYCLE</name>
<comment type="function">
    <text evidence="1">Catalyzes the phosphorylation of D-fructose 6-phosphate to fructose 1,6-bisphosphate by ATP, the first committing step of glycolysis.</text>
</comment>
<comment type="catalytic activity">
    <reaction evidence="1">
        <text>beta-D-fructose 6-phosphate + ATP = beta-D-fructose 1,6-bisphosphate + ADP + H(+)</text>
        <dbReference type="Rhea" id="RHEA:16109"/>
        <dbReference type="ChEBI" id="CHEBI:15378"/>
        <dbReference type="ChEBI" id="CHEBI:30616"/>
        <dbReference type="ChEBI" id="CHEBI:32966"/>
        <dbReference type="ChEBI" id="CHEBI:57634"/>
        <dbReference type="ChEBI" id="CHEBI:456216"/>
        <dbReference type="EC" id="2.7.1.11"/>
    </reaction>
</comment>
<comment type="cofactor">
    <cofactor evidence="1">
        <name>Mg(2+)</name>
        <dbReference type="ChEBI" id="CHEBI:18420"/>
    </cofactor>
</comment>
<comment type="pathway">
    <text evidence="1">Carbohydrate degradation; glycolysis; D-glyceraldehyde 3-phosphate and glycerone phosphate from D-glucose: step 3/4.</text>
</comment>
<comment type="subunit">
    <text evidence="1">Homodimer or homotetramer.</text>
</comment>
<comment type="subcellular location">
    <subcellularLocation>
        <location evidence="1">Cytoplasm</location>
    </subcellularLocation>
</comment>
<comment type="similarity">
    <text evidence="1">Belongs to the phosphofructokinase type A (PFKA) family. Mixed-substrate PFK group III subfamily.</text>
</comment>
<comment type="sequence caution" evidence="2">
    <conflict type="erroneous initiation">
        <sequence resource="EMBL-CDS" id="CAB16429"/>
    </conflict>
</comment>
<accession>O33106</accession>
<reference key="1">
    <citation type="journal article" date="2001" name="Nature">
        <title>Massive gene decay in the leprosy bacillus.</title>
        <authorList>
            <person name="Cole S.T."/>
            <person name="Eiglmeier K."/>
            <person name="Parkhill J."/>
            <person name="James K.D."/>
            <person name="Thomson N.R."/>
            <person name="Wheeler P.R."/>
            <person name="Honore N."/>
            <person name="Garnier T."/>
            <person name="Churcher C.M."/>
            <person name="Harris D.E."/>
            <person name="Mungall K.L."/>
            <person name="Basham D."/>
            <person name="Brown D."/>
            <person name="Chillingworth T."/>
            <person name="Connor R."/>
            <person name="Davies R.M."/>
            <person name="Devlin K."/>
            <person name="Duthoy S."/>
            <person name="Feltwell T."/>
            <person name="Fraser A."/>
            <person name="Hamlin N."/>
            <person name="Holroyd S."/>
            <person name="Hornsby T."/>
            <person name="Jagels K."/>
            <person name="Lacroix C."/>
            <person name="Maclean J."/>
            <person name="Moule S."/>
            <person name="Murphy L.D."/>
            <person name="Oliver K."/>
            <person name="Quail M.A."/>
            <person name="Rajandream M.A."/>
            <person name="Rutherford K.M."/>
            <person name="Rutter S."/>
            <person name="Seeger K."/>
            <person name="Simon S."/>
            <person name="Simmonds M."/>
            <person name="Skelton J."/>
            <person name="Squares R."/>
            <person name="Squares S."/>
            <person name="Stevens K."/>
            <person name="Taylor K."/>
            <person name="Whitehead S."/>
            <person name="Woodward J.R."/>
            <person name="Barrell B.G."/>
        </authorList>
    </citation>
    <scope>NUCLEOTIDE SEQUENCE [LARGE SCALE GENOMIC DNA]</scope>
    <source>
        <strain>TN</strain>
    </source>
</reference>
<sequence length="343" mass="37002">MRIGILTGGGDCPGLNAVIRAIVRTCDARYGSSVVGFQDGWRGLLENRRMQLCNDDRNDRLLAKGGTMLGTAHVHPDKLRAGLHQIKQTLDDNGIDVLIPIGGEGTLTAAHWLSQEDVPVVGVPKTIDNDIDCTDVTFGHDTALTVATEAIDRLHSTAESHQRVMLVEVMGRHAGWIALSSGLASGAHMTLIPEQPFDVEEVCCLVKRRFQRGDSHFICVVAEGAKPVPGSITLRQGGMDEFGHERFTGVAAQLGAEVEKRINKDVRVTVLGHVQRGGTPTAFDRVLATRFGVNAADASHAGEYGQMVSLRGQDIGRVPLEDAVRQLKLVPESRYDDAAAFFG</sequence>
<organism>
    <name type="scientific">Mycobacterium leprae (strain TN)</name>
    <dbReference type="NCBI Taxonomy" id="272631"/>
    <lineage>
        <taxon>Bacteria</taxon>
        <taxon>Bacillati</taxon>
        <taxon>Actinomycetota</taxon>
        <taxon>Actinomycetes</taxon>
        <taxon>Mycobacteriales</taxon>
        <taxon>Mycobacteriaceae</taxon>
        <taxon>Mycobacterium</taxon>
    </lineage>
</organism>